<proteinExistence type="evidence at protein level"/>
<reference key="1">
    <citation type="journal article" date="2007" name="Dev. Biol.">
        <title>Tudor-related proteins TDRD1/MTR-1, TDRD6 and TDRD7/TRAP: domain composition, intracellular localization, and function in male germ cells in mice.</title>
        <authorList>
            <person name="Hosokawa M."/>
            <person name="Shoji M."/>
            <person name="Kitamura K."/>
            <person name="Tanaka T."/>
            <person name="Noce T."/>
            <person name="Chuma S."/>
            <person name="Nakatsuji N."/>
        </authorList>
    </citation>
    <scope>NUCLEOTIDE SEQUENCE [MRNA]</scope>
    <scope>IDENTIFICATION IN A MRNP COMPLEX</scope>
    <scope>SUBCELLULAR LOCATION</scope>
    <scope>TISSUE SPECIFICITY</scope>
    <source>
        <tissue>Testis</tissue>
    </source>
</reference>
<reference key="2">
    <citation type="journal article" date="2009" name="Curr. Biol.">
        <title>Tdrd6 is required for spermiogenesis, chromatoid body architecture, and regulation of miRNA expression.</title>
        <authorList>
            <person name="Vasileva A."/>
            <person name="Tiedau D."/>
            <person name="Firooznia A."/>
            <person name="Muller-Reichert T."/>
            <person name="Jessberger R."/>
        </authorList>
    </citation>
    <scope>FUNCTION</scope>
    <scope>INTERACTION WITH DDX4</scope>
    <scope>IDENTIFICATION IN A COMPLEX WITH PIWIL1 AND PIWIL2</scope>
    <scope>SUBCELLULAR LOCATION</scope>
    <scope>DISRUPTION PHENOTYPE</scope>
    <scope>TISSUE SPECIFICITY</scope>
    <scope>IDENTIFICATION BY MASS SPECTROMETRY</scope>
</reference>
<reference key="3">
    <citation type="journal article" date="2009" name="Genes Dev.">
        <title>Proteomic analysis of murine Piwi proteins reveals a role for arginine methylation in specifying interaction with Tudor family members.</title>
        <authorList>
            <person name="Vagin V.V."/>
            <person name="Wohlschlegel J."/>
            <person name="Qu J."/>
            <person name="Jonsson Z."/>
            <person name="Huang X."/>
            <person name="Chuma S."/>
            <person name="Girard A."/>
            <person name="Sachidanandam R."/>
            <person name="Hannon G.J."/>
            <person name="Aravin A.A."/>
        </authorList>
    </citation>
    <scope>INTERACTION WITH PIWIL1</scope>
</reference>
<reference key="4">
    <citation type="journal article" date="2010" name="Cell">
        <title>A tissue-specific atlas of mouse protein phosphorylation and expression.</title>
        <authorList>
            <person name="Huttlin E.L."/>
            <person name="Jedrychowski M.P."/>
            <person name="Elias J.E."/>
            <person name="Goswami T."/>
            <person name="Rad R."/>
            <person name="Beausoleil S.A."/>
            <person name="Villen J."/>
            <person name="Haas W."/>
            <person name="Sowa M.E."/>
            <person name="Gygi S.P."/>
        </authorList>
    </citation>
    <scope>PHOSPHORYLATION [LARGE SCALE ANALYSIS] AT THR-292; SER-1723; SER-1726; SER-1925; SER-1980; SER-2063 AND SER-2115</scope>
    <scope>IDENTIFICATION BY MASS SPECTROMETRY [LARGE SCALE ANALYSIS]</scope>
    <source>
        <tissue>Testis</tissue>
    </source>
</reference>
<reference key="5">
    <citation type="journal article" date="2010" name="RNA">
        <title>Arginine methylation of Aubergine mediates Tudor binding and germ plasm localization.</title>
        <authorList>
            <person name="Kirino Y."/>
            <person name="Vourekas A."/>
            <person name="Sayed N."/>
            <person name="de Lima Alves F."/>
            <person name="Thomson T."/>
            <person name="Lasko P."/>
            <person name="Rappsilber J."/>
            <person name="Jongens T.A."/>
            <person name="Mourelatos Z."/>
        </authorList>
    </citation>
    <scope>IDENTIFICATION BY MASS SPECTROMETRY</scope>
    <scope>INTERACTION WITH PIWIL1</scope>
    <scope>TISSUE SPECIFICITY</scope>
</reference>
<reference key="6">
    <citation type="journal article" date="2016" name="PLoS Genet.">
        <title>Chromatoid Body Protein TDRD6 Supports Long 3' UTR Triggered Nonsense Mediated mRNA Decay.</title>
        <authorList>
            <person name="Fanourgakis G."/>
            <person name="Lesche M."/>
            <person name="Akpinar M."/>
            <person name="Dahl A."/>
            <person name="Jessberger R."/>
        </authorList>
    </citation>
    <scope>FUNCTION</scope>
    <scope>DISRUPTION PHENOTYPE</scope>
</reference>
<reference key="7">
    <citation type="journal article" date="2017" name="PLoS Genet.">
        <title>TDRD6 mediates early steps of spliceosome maturation in primary spermatocytes.</title>
        <authorList>
            <person name="Akpinar M."/>
            <person name="Lesche M."/>
            <person name="Fanourgakis G."/>
            <person name="Fu J."/>
            <person name="Anastassiadis K."/>
            <person name="Dahl A."/>
            <person name="Jessberger R."/>
        </authorList>
    </citation>
    <scope>FUNCTION</scope>
    <scope>INTERACTION WITH PRMT5</scope>
    <scope>INTERACTION WITH SNRPB</scope>
</reference>
<reference key="8">
    <citation type="journal article" date="2017" name="J. Cell Sci.">
        <title>Tex19 paralogs are new members of the piRNA pathway controlling retrotransposon suppression.</title>
        <authorList>
            <person name="Tarabay Y."/>
            <person name="Achour M."/>
            <person name="Teletin M."/>
            <person name="Ye T."/>
            <person name="Teissandier A."/>
            <person name="Mark M."/>
            <person name="Bourc'his D."/>
            <person name="Viville S."/>
        </authorList>
    </citation>
    <scope>INTERACTION WITH TEX19.1</scope>
</reference>
<evidence type="ECO:0000250" key="1">
    <source>
        <dbReference type="UniProtKB" id="F1R237"/>
    </source>
</evidence>
<evidence type="ECO:0000255" key="2">
    <source>
        <dbReference type="PROSITE-ProRule" id="PRU00211"/>
    </source>
</evidence>
<evidence type="ECO:0000256" key="3">
    <source>
        <dbReference type="SAM" id="MobiDB-lite"/>
    </source>
</evidence>
<evidence type="ECO:0000269" key="4">
    <source>
    </source>
</evidence>
<evidence type="ECO:0000269" key="5">
    <source>
    </source>
</evidence>
<evidence type="ECO:0000269" key="6">
    <source>
    </source>
</evidence>
<evidence type="ECO:0000269" key="7">
    <source>
    </source>
</evidence>
<evidence type="ECO:0000269" key="8">
    <source>
    </source>
</evidence>
<evidence type="ECO:0000269" key="9">
    <source>
    </source>
</evidence>
<evidence type="ECO:0000269" key="10">
    <source>
    </source>
</evidence>
<evidence type="ECO:0000303" key="11">
    <source>
    </source>
</evidence>
<evidence type="ECO:0000305" key="12">
    <source>
    </source>
</evidence>
<evidence type="ECO:0000312" key="13">
    <source>
        <dbReference type="MGI" id="MGI:2679727"/>
    </source>
</evidence>
<evidence type="ECO:0007744" key="14">
    <source>
    </source>
</evidence>
<dbReference type="EMBL" id="AB097085">
    <property type="protein sequence ID" value="BAD01486.1"/>
    <property type="molecule type" value="mRNA"/>
</dbReference>
<dbReference type="CCDS" id="CCDS28797.1"/>
<dbReference type="RefSeq" id="NP_940810.2">
    <property type="nucleotide sequence ID" value="NM_198418.2"/>
</dbReference>
<dbReference type="SMR" id="P61407"/>
<dbReference type="BioGRID" id="229157">
    <property type="interactions" value="7"/>
</dbReference>
<dbReference type="FunCoup" id="P61407">
    <property type="interactions" value="44"/>
</dbReference>
<dbReference type="STRING" id="10090.ENSMUSP00000035338"/>
<dbReference type="GlyGen" id="P61407">
    <property type="glycosylation" value="2 sites"/>
</dbReference>
<dbReference type="iPTMnet" id="P61407"/>
<dbReference type="PhosphoSitePlus" id="P61407"/>
<dbReference type="PaxDb" id="10090-ENSMUSP00000035338"/>
<dbReference type="ProteomicsDB" id="262747"/>
<dbReference type="GeneID" id="210510"/>
<dbReference type="KEGG" id="mmu:210510"/>
<dbReference type="AGR" id="MGI:2679727"/>
<dbReference type="CTD" id="221400"/>
<dbReference type="MGI" id="MGI:2679727">
    <property type="gene designation" value="Tdrd6"/>
</dbReference>
<dbReference type="eggNOG" id="KOG2039">
    <property type="taxonomic scope" value="Eukaryota"/>
</dbReference>
<dbReference type="InParanoid" id="P61407"/>
<dbReference type="OrthoDB" id="9989103at2759"/>
<dbReference type="PhylomeDB" id="P61407"/>
<dbReference type="BioGRID-ORCS" id="210510">
    <property type="hits" value="4 hits in 79 CRISPR screens"/>
</dbReference>
<dbReference type="CD-CODE" id="DE1E139C">
    <property type="entry name" value="Chromatoid body"/>
</dbReference>
<dbReference type="PRO" id="PR:P61407"/>
<dbReference type="Proteomes" id="UP000000589">
    <property type="component" value="Unplaced"/>
</dbReference>
<dbReference type="RNAct" id="P61407">
    <property type="molecule type" value="protein"/>
</dbReference>
<dbReference type="GO" id="GO:0033391">
    <property type="term" value="C:chromatoid body"/>
    <property type="evidence" value="ECO:0000314"/>
    <property type="project" value="UniProtKB"/>
</dbReference>
<dbReference type="GO" id="GO:0005737">
    <property type="term" value="C:cytoplasm"/>
    <property type="evidence" value="ECO:0000314"/>
    <property type="project" value="UniProtKB"/>
</dbReference>
<dbReference type="GO" id="GO:0005829">
    <property type="term" value="C:cytosol"/>
    <property type="evidence" value="ECO:0000304"/>
    <property type="project" value="Reactome"/>
</dbReference>
<dbReference type="GO" id="GO:0005783">
    <property type="term" value="C:endoplasmic reticulum"/>
    <property type="evidence" value="ECO:0000314"/>
    <property type="project" value="MGI"/>
</dbReference>
<dbReference type="GO" id="GO:0043186">
    <property type="term" value="C:P granule"/>
    <property type="evidence" value="ECO:0000314"/>
    <property type="project" value="MGI"/>
</dbReference>
<dbReference type="GO" id="GO:1990904">
    <property type="term" value="C:ribonucleoprotein complex"/>
    <property type="evidence" value="ECO:0000314"/>
    <property type="project" value="MGI"/>
</dbReference>
<dbReference type="GO" id="GO:0045202">
    <property type="term" value="C:synapse"/>
    <property type="evidence" value="ECO:0000314"/>
    <property type="project" value="SynGO"/>
</dbReference>
<dbReference type="GO" id="GO:0007281">
    <property type="term" value="P:germ cell development"/>
    <property type="evidence" value="ECO:0000314"/>
    <property type="project" value="MGI"/>
</dbReference>
<dbReference type="GO" id="GO:0048477">
    <property type="term" value="P:oogenesis"/>
    <property type="evidence" value="ECO:0007669"/>
    <property type="project" value="UniProtKB-KW"/>
</dbReference>
<dbReference type="GO" id="GO:0007283">
    <property type="term" value="P:spermatogenesis"/>
    <property type="evidence" value="ECO:0000315"/>
    <property type="project" value="UniProtKB"/>
</dbReference>
<dbReference type="GO" id="GO:0000387">
    <property type="term" value="P:spliceosomal snRNP assembly"/>
    <property type="evidence" value="ECO:0000315"/>
    <property type="project" value="CACAO"/>
</dbReference>
<dbReference type="CDD" id="cd20420">
    <property type="entry name" value="Tudor_TDRD6_rpt1"/>
    <property type="match status" value="1"/>
</dbReference>
<dbReference type="CDD" id="cd20421">
    <property type="entry name" value="Tudor_TDRD6_rpt2"/>
    <property type="match status" value="1"/>
</dbReference>
<dbReference type="FunFam" id="2.30.30.140:FF:000085">
    <property type="entry name" value="Tudor domain-containing protein 6"/>
    <property type="match status" value="1"/>
</dbReference>
<dbReference type="Gene3D" id="2.30.30.140">
    <property type="match status" value="6"/>
</dbReference>
<dbReference type="Gene3D" id="2.40.50.90">
    <property type="match status" value="7"/>
</dbReference>
<dbReference type="InterPro" id="IPR035437">
    <property type="entry name" value="SNase_OB-fold_sf"/>
</dbReference>
<dbReference type="InterPro" id="IPR002999">
    <property type="entry name" value="Tudor"/>
</dbReference>
<dbReference type="InterPro" id="IPR050621">
    <property type="entry name" value="Tudor_domain_containing"/>
</dbReference>
<dbReference type="InterPro" id="IPR047444">
    <property type="entry name" value="Tudor_TDRD6_rpt1"/>
</dbReference>
<dbReference type="InterPro" id="IPR047445">
    <property type="entry name" value="Tudor_TDRD6_rpt2"/>
</dbReference>
<dbReference type="PANTHER" id="PTHR22948:SF29">
    <property type="entry name" value="FI02030P-RELATED"/>
    <property type="match status" value="1"/>
</dbReference>
<dbReference type="PANTHER" id="PTHR22948">
    <property type="entry name" value="TUDOR DOMAIN CONTAINING PROTEIN"/>
    <property type="match status" value="1"/>
</dbReference>
<dbReference type="Pfam" id="PF00567">
    <property type="entry name" value="TUDOR"/>
    <property type="match status" value="7"/>
</dbReference>
<dbReference type="SMART" id="SM00333">
    <property type="entry name" value="TUDOR"/>
    <property type="match status" value="7"/>
</dbReference>
<dbReference type="SUPFAM" id="SSF63748">
    <property type="entry name" value="Tudor/PWWP/MBT"/>
    <property type="match status" value="7"/>
</dbReference>
<dbReference type="PROSITE" id="PS50304">
    <property type="entry name" value="TUDOR"/>
    <property type="match status" value="6"/>
</dbReference>
<keyword id="KW-0963">Cytoplasm</keyword>
<keyword id="KW-0217">Developmental protein</keyword>
<keyword id="KW-0221">Differentiation</keyword>
<keyword id="KW-0896">Oogenesis</keyword>
<keyword id="KW-0597">Phosphoprotein</keyword>
<keyword id="KW-1185">Reference proteome</keyword>
<keyword id="KW-0677">Repeat</keyword>
<keyword id="KW-0744">Spermatogenesis</keyword>
<organism>
    <name type="scientific">Mus musculus</name>
    <name type="common">Mouse</name>
    <dbReference type="NCBI Taxonomy" id="10090"/>
    <lineage>
        <taxon>Eukaryota</taxon>
        <taxon>Metazoa</taxon>
        <taxon>Chordata</taxon>
        <taxon>Craniata</taxon>
        <taxon>Vertebrata</taxon>
        <taxon>Euteleostomi</taxon>
        <taxon>Mammalia</taxon>
        <taxon>Eutheria</taxon>
        <taxon>Euarchontoglires</taxon>
        <taxon>Glires</taxon>
        <taxon>Rodentia</taxon>
        <taxon>Myomorpha</taxon>
        <taxon>Muroidea</taxon>
        <taxon>Muridae</taxon>
        <taxon>Murinae</taxon>
        <taxon>Mus</taxon>
        <taxon>Mus</taxon>
    </lineage>
</organism>
<comment type="function">
    <text evidence="1 5 8 10">Tudor domain-containing protein involved in germ cell development, more specifically the formation of chromatoid body (during spermiogenesis), Balbiani body (during oogenesis), germ plasm (upon fertilization), and for proper miRNA expression and spliceosome maturation (By similarity) (PubMed:19345099, PubMed:27149095, PubMed:28263986). Essential for RNA-dependent helicase UPF1 localization to chromatoid body, for UPF1-UPF2 and UPF1-DDX4 interactions which are required for mRNA degradation, using the extended 3' UTR-triggered nonsense-mediated mRNA decay (NMD) pathway (PubMed:27149095). Involved in spliceosome maturation and mRNA splicing in prophase I spermatocytes through interaction with arginine N-methyltransferase PRMT5 and symmetrically arginine dimethylated SNRPB (small nuclear ribonucleoprotein-associated protein) (PubMed:28263986).</text>
</comment>
<comment type="subunit">
    <text evidence="4 5 6 7 9 10">Found in a mRNP complex (i.e. messenger ribonucleoproteins which correspond to mRNA with bound proteins), at least composed of TDRD1, TDRD6, TDRD7 and DDX4 (PubMed:17141210). Found in a complex, at least composed of PIWIL1, PIWIL2, DDX4 and TDRD6 (PubMed:19345099, PubMed:19584108, PubMed:19926723). Interacts with Tex19.1 and probably Tex19.2 (PubMed:28254886). Interacts with PRMT5 (PubMed:28263986). Interacts with SNRPB (when methylated); to trigger spliceosome formation (PubMed:28263986).</text>
</comment>
<comment type="subcellular location">
    <subcellularLocation>
        <location evidence="4 5 8 10">Cytoplasm</location>
    </subcellularLocation>
    <text evidence="4 5 8">Present in chromatoid body (CB) of spermatids, also named processing bodies (P-bodies) in somatic cells (PubMed:17141210, PubMed:19345099, PubMed:27149095). Detected in the multilobular cytoplasmic CBs (also called intermitochondrial cementin) in pachytene spermatocytes and as a single perinuclear CB in haploid round spermatids (PubMed:17141210, PubMed:19345099). Colocalizes in CB with DDX4, PIWIL1, PIWIL2, TDRD1 and TDRD7 (PubMed:17141210, PubMed:19345099).</text>
</comment>
<comment type="tissue specificity">
    <text evidence="4 5 7">Testis specific. Expressed in primary spermatocytes at post natal (PN) day 17.5. Expressed in midpachytene stage of primary spermatocytes at PN16 and in round spermatids at PN22 (at protein level).</text>
</comment>
<comment type="domain">
    <text evidence="12">The tudor domains recognize and bind to proteins with dimethylated arginine residues.</text>
</comment>
<comment type="PTM">
    <text>Undergoes proteolytic cleavage near the C-terminal by an unknown protease during the transition from meiosis I to meiosis II in primary spermatocytes.</text>
</comment>
<comment type="disruption phenotype">
    <text evidence="5 8 10">Males are sterile (elongated spermatids are almost completely lacking), but viable (PubMed:19345099). Chromatoid body (CB) components mislocalize and CB architecture is distorted in round spermatids (PubMed:19345099). miRNA expression is altered (PubMed:19345099). Knockout spermatids are accompanied by distortion of chromatoid body structure, preventing UPF1-DDX4 and UPF1-UPF2 interactions, as well as disturbed association of several mRNAs with UPF1 and UPF2, and impaired long 3' UTR-triggered NMD (PubMed:27149095). Knockout diplotene spermatocytes display a reduction of PRMT5 association with SNRPB (also named SmB) and a reduction in arginine dimethylation of SNRPB, leading to an impairment in the assembly of spliceosomes (PubMed:28263986).</text>
</comment>
<protein>
    <recommendedName>
        <fullName evidence="11">Tudor domain-containing protein 6</fullName>
    </recommendedName>
</protein>
<feature type="chain" id="PRO_0000183168" description="Tudor domain-containing protein 6">
    <location>
        <begin position="1"/>
        <end position="2134"/>
    </location>
</feature>
<feature type="domain" description="Tudor 1" evidence="2">
    <location>
        <begin position="309"/>
        <end position="368"/>
    </location>
</feature>
<feature type="domain" description="Tudor 2" evidence="2">
    <location>
        <begin position="542"/>
        <end position="599"/>
    </location>
</feature>
<feature type="domain" description="Tudor 3" evidence="2">
    <location>
        <begin position="820"/>
        <end position="879"/>
    </location>
</feature>
<feature type="domain" description="Tudor 4" evidence="2">
    <location>
        <begin position="1038"/>
        <end position="1092"/>
    </location>
</feature>
<feature type="domain" description="Tudor 5" evidence="2">
    <location>
        <begin position="1358"/>
        <end position="1417"/>
    </location>
</feature>
<feature type="domain" description="Tudor 6" evidence="2">
    <location>
        <begin position="1570"/>
        <end position="1630"/>
    </location>
</feature>
<feature type="region of interest" description="Disordered" evidence="3">
    <location>
        <begin position="287"/>
        <end position="315"/>
    </location>
</feature>
<feature type="region of interest" description="Disordered" evidence="3">
    <location>
        <begin position="1271"/>
        <end position="1296"/>
    </location>
</feature>
<feature type="region of interest" description="Disordered" evidence="3">
    <location>
        <begin position="1699"/>
        <end position="1733"/>
    </location>
</feature>
<feature type="region of interest" description="Disordered" evidence="3">
    <location>
        <begin position="1860"/>
        <end position="1885"/>
    </location>
</feature>
<feature type="region of interest" description="Disordered" evidence="3">
    <location>
        <begin position="1930"/>
        <end position="1985"/>
    </location>
</feature>
<feature type="compositionally biased region" description="Basic and acidic residues" evidence="3">
    <location>
        <begin position="1282"/>
        <end position="1296"/>
    </location>
</feature>
<feature type="compositionally biased region" description="Basic and acidic residues" evidence="3">
    <location>
        <begin position="1711"/>
        <end position="1722"/>
    </location>
</feature>
<feature type="compositionally biased region" description="Polar residues" evidence="3">
    <location>
        <begin position="1930"/>
        <end position="1939"/>
    </location>
</feature>
<feature type="modified residue" description="Phosphothreonine" evidence="14">
    <location>
        <position position="292"/>
    </location>
</feature>
<feature type="modified residue" description="Phosphoserine" evidence="14">
    <location>
        <position position="1723"/>
    </location>
</feature>
<feature type="modified residue" description="Phosphoserine" evidence="14">
    <location>
        <position position="1726"/>
    </location>
</feature>
<feature type="modified residue" description="Phosphoserine" evidence="14">
    <location>
        <position position="1925"/>
    </location>
</feature>
<feature type="modified residue" description="Phosphoserine" evidence="14">
    <location>
        <position position="1980"/>
    </location>
</feature>
<feature type="modified residue" description="Phosphoserine" evidence="14">
    <location>
        <position position="2063"/>
    </location>
</feature>
<feature type="modified residue" description="Phosphoserine" evidence="14">
    <location>
        <position position="2115"/>
    </location>
</feature>
<name>TDRD6_MOUSE</name>
<sequence length="2134" mass="237914">MSSTPGLPTPGASLALRVSFVDVHPEVIPVQLWGLVGQRREEYVRLSREIQEAAATRGPWALGGASASPGELCLVQVGLMWHRCRVVSRQAQDSRVFLLDEGRTITAGAGSLAPGRSEFFHLPSEVLGCVLAGLVPAGGGGTGGGEPQQWSPRAVDFLSNLQGKEVHGRVLDVLLLHRLVLLEVPVVSQQMEELGLARQVPDSLFCSLLKRYLTAAGQGSSGAPVLPRAAPKQEHPGLDYFYPQLQLGVTEPVVVTQVCHPHRIHCQLRSLSQEIHRLSESMAQVYRAPVGTDDEDSGSATWEEREESPDKPGSPCASCGLDGQWYRALLLETFRPQRCAQVLHVDYGRKELVSCSSLRYLLPEYFRMPVVTYPCALYGLWDCGRGWSRSQVGDLKALILGQAVNAKIEFYCSFEHMYYVTLYGEDGINLNSAFGVQSCCLADWFLQSQGIEEEEEEDEDEVEAAFQSQSPAEEMEAEVSLPSLRSIRLKMNTFYDAQVEFVKSPSEFWIRLRKHKNTFSKLTKRMCSFYSSASKLDGVILRPEPDDLCCVKWKENGYYRATVTRLDSKSVDVFLVDRGNSENVDWCDVRMLLPQFRQLPILALKCTLADIWPLGKTWSQEATSFFKKTVLHKELVVHVLDKQDHQYVIEILDESRMGEENISKVIAQAGFAKFQEFETKENIRLSAHSPGHVSGHFMAEPSKITSAKKAEGDQRAKKDNKTLSVSEALADTVSLSNLSTAQDTEKVTSDPSLLMLNFLKTKPDCCGKGELEVGSTVEVKVSHIENPGSFWCQLMRNAQGFRTLMCDIEDYCKSSEPSPYEGDTRVCLAKRTASGRWSRALISGAHSLEHVRVVFVDYGDRDVVSTKDILSVSDVFFQVRAQAFRCSLYNLIQPMGENPFVWDEKAVQAFSGFIDSARQNNLELKCTVFALASRHEEEWFNVVDLLTPFQSACRFLVEKRLARPVKHQKPLEPSVQLHSYYYSTHDLKIGSEELVYVTHADDPWTFYCQLARNINVLEQLSYNIMQLSKALLNLKASTLAPGTLCLARYTDGNWYRGIIIEKEPSKVFFVDFGNTYIAVDHLLPIPRDAHDVLLLPMQALKCSLSDIPHHIPEEVTAWFQETVLDKSLKALVVAKDPDGRLIIELYDDSVQINASINEKLGLLGYKNRTRRKEKENEIILHETKALEDKKESVKPSLADYLGKPGESKAHSIEIMGESCKPKMGPACKELRYLQGSAKANLVPPYQDSVGNKNDGGFPLTREKKEDIFASSPMSGTKLDSALPERRMGEPSGRDLPPKFCEFPQKTIAPGFKTSVYVSHINDLSDFYIQLIEDEAEINNLSERLNDVRTRPQYHTGPQWQSGDVICAVFPEDNLWYRALVMEQQPNGLLSVQFIDYGNMSVVHTNRTGRLGPVDAVLPALCLHCSLWGLSVPVCKEMVSYFSQRTDEAQIRCEFVKFQGTWEVILADEHGVIAEDMISRFPCNGNSQAGLTTQTMKGDCLKIANKPNTDTSVLLNWYNPKAKLIKAYATVIDGPEYFWCQFADSEKLQYLETEVQSAGKQLSDRRSCTQCPQIGDPCIVRYREDGHYYRALITNICDGELASVRLVDFGNAEDCVDAKELWSIPSELLLVPMQAFPCCLAGFSVSGGVCPQEGNDYFYDIVTEDVLDITILEIKRDVCNIPLAIVELRSKGENINEKMKKYAKTGVPKNDLSSEKRGPERKGSLASPDLGLKKPSHKIAQDKTFYGEARASELSERLEKDLNIETKTSKFYERSTRSIFNAFENSCKGKMGSERLEGSMDYHFVDRAKFDNNYLITGFNPILAHASEPKELLELSSLEVPLSADNDDECKEFLELESIELQHSPAGEEEKEELGLGSPMAPLSPGCQAGATLESFMMQLPLDCEAEKQLELKLPTPQLSLEDSISPLSAAVSQDIQGSRCSEDERKAGYMGSSDDDHSRSPLLQHGKGGNSPAHDGRNLSEEEFPQFESRDSAALLAPLFSEEEAREGRKCGSMVPAQLQSTYTLKGFSVGSKCVVWSSLRNTWSKCEILELAEEGTRVLNLSNGVEETVSPENVWNGIPKVDKRPSEAVFQTVGKDLPFMPSDDATTKGFSSVSEEEACGGDADSLSTAKLNI</sequence>
<gene>
    <name evidence="11 13" type="primary">Tdrd6</name>
</gene>
<accession>P61407</accession>